<sequence length="229" mass="25845">MRLNVAVFFGALFGALGVLLFLVAFGSDYWLLATEVGRCSGEQNIENITFHHEGFFWRCWFSGVVEENNSNIWKFWYTNQPPSKNCTHAYLSPYPFMRGEHNSTSYDSAIIYRGFWAVLLLLGVVAALTASFLIICAAPFSSHFLYKAGGGSYIASGVLFSLVVILYVIWVQAVADMESYRALRMRDCWEFTPSILYGWSFFLAPAGVFFSLLAGLLFLVVGRHIQIHH</sequence>
<comment type="function">
    <text evidence="4">Negatively regulates myogenesis and skeletal muscle regeneration via its association with ITGB1 (PubMed:34427057). Modulates ITGB1 activation by decreasing ITGB1-LAMB1 interaction and inhibiting ITGB1-mediated intracellular signaling during myogenesis (PubMed:34427057).</text>
</comment>
<comment type="subunit">
    <text evidence="1">Interacts with ITGB1.</text>
</comment>
<comment type="subcellular location">
    <subcellularLocation>
        <location evidence="1">Cell membrane</location>
        <topology evidence="2">Multi-pass membrane protein</topology>
    </subcellularLocation>
</comment>
<comment type="tissue specificity">
    <text evidence="3 4">Highly expressed in white adipose tissues (WAT), with 10-fold to 20-fold higher levels than in brown adipose tissue (BAT). Also expressed in skeletal muscle, heart and lung. Lower relative levels of expression in kidney, spleen, testis, brain and liver.</text>
</comment>
<comment type="developmental stage">
    <text evidence="3">Up-regulated in adipogenesis and also markedly up-regulated during in vitro myogenesis of C2C12 myoblasts to myocytes.</text>
</comment>
<comment type="induction">
    <text evidence="4">Up-regulated during myoblast differentiation.</text>
</comment>
<comment type="disruption phenotype">
    <text evidence="4">Mice exhibit significant increases in body weight, muscle mass, muscle fiber number, muscle fiber diameter and myotube formation and an acceleration of skeletal muscle regeneration.</text>
</comment>
<comment type="similarity">
    <text evidence="5">Belongs to the TMEM182 family.</text>
</comment>
<protein>
    <recommendedName>
        <fullName>Transmembrane protein 182</fullName>
    </recommendedName>
</protein>
<accession>B2RVY9</accession>
<organism>
    <name type="scientific">Mus musculus</name>
    <name type="common">Mouse</name>
    <dbReference type="NCBI Taxonomy" id="10090"/>
    <lineage>
        <taxon>Eukaryota</taxon>
        <taxon>Metazoa</taxon>
        <taxon>Chordata</taxon>
        <taxon>Craniata</taxon>
        <taxon>Vertebrata</taxon>
        <taxon>Euteleostomi</taxon>
        <taxon>Mammalia</taxon>
        <taxon>Eutheria</taxon>
        <taxon>Euarchontoglires</taxon>
        <taxon>Glires</taxon>
        <taxon>Rodentia</taxon>
        <taxon>Myomorpha</taxon>
        <taxon>Muroidea</taxon>
        <taxon>Muridae</taxon>
        <taxon>Murinae</taxon>
        <taxon>Mus</taxon>
        <taxon>Mus</taxon>
    </lineage>
</organism>
<reference key="1">
    <citation type="submission" date="2005-07" db="EMBL/GenBank/DDBJ databases">
        <authorList>
            <person name="Mural R.J."/>
            <person name="Adams M.D."/>
            <person name="Myers E.W."/>
            <person name="Smith H.O."/>
            <person name="Venter J.C."/>
        </authorList>
    </citation>
    <scope>NUCLEOTIDE SEQUENCE [LARGE SCALE GENOMIC DNA]</scope>
</reference>
<reference key="2">
    <citation type="journal article" date="2004" name="Genome Res.">
        <title>The status, quality, and expansion of the NIH full-length cDNA project: the Mammalian Gene Collection (MGC).</title>
        <authorList>
            <consortium name="The MGC Project Team"/>
        </authorList>
    </citation>
    <scope>NUCLEOTIDE SEQUENCE [LARGE SCALE MRNA]</scope>
    <source>
        <tissue>Brain</tissue>
    </source>
</reference>
<reference key="3">
    <citation type="journal article" date="2008" name="BMC Res. Notes">
        <title>Expression and regulation of transcript for the novel transmembrane protein Tmem182 in the adipocyte and muscle lineage.</title>
        <authorList>
            <person name="Wu Y."/>
            <person name="Smas C.M."/>
        </authorList>
    </citation>
    <scope>TISSUE SPECIFICITY</scope>
    <scope>DEVELOPMENTAL STAGE</scope>
</reference>
<reference key="4">
    <citation type="journal article" date="2010" name="Cell">
        <title>A tissue-specific atlas of mouse protein phosphorylation and expression.</title>
        <authorList>
            <person name="Huttlin E.L."/>
            <person name="Jedrychowski M.P."/>
            <person name="Elias J.E."/>
            <person name="Goswami T."/>
            <person name="Rad R."/>
            <person name="Beausoleil S.A."/>
            <person name="Villen J."/>
            <person name="Haas W."/>
            <person name="Sowa M.E."/>
            <person name="Gygi S.P."/>
        </authorList>
    </citation>
    <scope>IDENTIFICATION BY MASS SPECTROMETRY [LARGE SCALE ANALYSIS]</scope>
    <source>
        <tissue>Heart</tissue>
    </source>
</reference>
<reference key="5">
    <citation type="journal article" date="2021" name="J. Cachexia Sarcopenia Muscle">
        <title>TMEM182 interacts with integrin beta 1 and regulates myoblast differentiation and muscle regeneration.</title>
        <authorList>
            <person name="Luo W."/>
            <person name="Lin Z."/>
            <person name="Chen J."/>
            <person name="Chen G."/>
            <person name="Zhang S."/>
            <person name="Liu M."/>
            <person name="Li H."/>
            <person name="He D."/>
            <person name="Liang S."/>
            <person name="Luo Q."/>
            <person name="Zhang D."/>
            <person name="Nie Q."/>
            <person name="Zhang X."/>
        </authorList>
    </citation>
    <scope>FUNCTION</scope>
    <scope>DISRUPTION PHENOTYPE</scope>
    <scope>TISSUE SPECIFICITY</scope>
    <scope>INDUCTION</scope>
</reference>
<gene>
    <name type="primary">Tmem182</name>
</gene>
<name>TM182_MOUSE</name>
<dbReference type="EMBL" id="CH466536">
    <property type="protein sequence ID" value="EDL14585.1"/>
    <property type="molecule type" value="Genomic_DNA"/>
</dbReference>
<dbReference type="EMBL" id="BC147440">
    <property type="protein sequence ID" value="AAI47441.1"/>
    <property type="molecule type" value="mRNA"/>
</dbReference>
<dbReference type="EMBL" id="BC147458">
    <property type="protein sequence ID" value="AAI47459.1"/>
    <property type="molecule type" value="mRNA"/>
</dbReference>
<dbReference type="EMBL" id="BC147740">
    <property type="protein sequence ID" value="AAI47741.1"/>
    <property type="molecule type" value="mRNA"/>
</dbReference>
<dbReference type="EMBL" id="BC147743">
    <property type="protein sequence ID" value="AAI47744.1"/>
    <property type="molecule type" value="mRNA"/>
</dbReference>
<dbReference type="CCDS" id="CCDS35550.1"/>
<dbReference type="RefSeq" id="NP_001074667.1">
    <property type="nucleotide sequence ID" value="NM_001081198.1"/>
</dbReference>
<dbReference type="FunCoup" id="B2RVY9">
    <property type="interactions" value="16"/>
</dbReference>
<dbReference type="STRING" id="10090.ENSMUSP00000110413"/>
<dbReference type="GlyCosmos" id="B2RVY9">
    <property type="glycosylation" value="4 sites, No reported glycans"/>
</dbReference>
<dbReference type="GlyGen" id="B2RVY9">
    <property type="glycosylation" value="4 sites"/>
</dbReference>
<dbReference type="PhosphoSitePlus" id="B2RVY9"/>
<dbReference type="PaxDb" id="10090-ENSMUSP00000110413"/>
<dbReference type="ProteomicsDB" id="259466"/>
<dbReference type="Antibodypedia" id="66643">
    <property type="antibodies" value="19 antibodies from 13 providers"/>
</dbReference>
<dbReference type="Ensembl" id="ENSMUST00000114765.4">
    <property type="protein sequence ID" value="ENSMUSP00000110413.3"/>
    <property type="gene ID" value="ENSMUSG00000079588.4"/>
</dbReference>
<dbReference type="GeneID" id="381339"/>
<dbReference type="KEGG" id="mmu:381339"/>
<dbReference type="UCSC" id="uc007auq.1">
    <property type="organism name" value="mouse"/>
</dbReference>
<dbReference type="AGR" id="MGI:1923725"/>
<dbReference type="CTD" id="130827"/>
<dbReference type="MGI" id="MGI:1923725">
    <property type="gene designation" value="Tmem182"/>
</dbReference>
<dbReference type="VEuPathDB" id="HostDB:ENSMUSG00000079588"/>
<dbReference type="eggNOG" id="ENOG502QVS4">
    <property type="taxonomic scope" value="Eukaryota"/>
</dbReference>
<dbReference type="GeneTree" id="ENSGT00390000017581"/>
<dbReference type="HOGENOM" id="CLU_105472_0_0_1"/>
<dbReference type="InParanoid" id="B2RVY9"/>
<dbReference type="OMA" id="RYGWSFI"/>
<dbReference type="OrthoDB" id="9942154at2759"/>
<dbReference type="PhylomeDB" id="B2RVY9"/>
<dbReference type="TreeFam" id="TF331344"/>
<dbReference type="BioGRID-ORCS" id="381339">
    <property type="hits" value="2 hits in 78 CRISPR screens"/>
</dbReference>
<dbReference type="PRO" id="PR:B2RVY9"/>
<dbReference type="Proteomes" id="UP000000589">
    <property type="component" value="Chromosome 1"/>
</dbReference>
<dbReference type="RNAct" id="B2RVY9">
    <property type="molecule type" value="protein"/>
</dbReference>
<dbReference type="Bgee" id="ENSMUSG00000079588">
    <property type="expression patterns" value="Expressed in interventricular septum and 87 other cell types or tissues"/>
</dbReference>
<dbReference type="GO" id="GO:0005886">
    <property type="term" value="C:plasma membrane"/>
    <property type="evidence" value="ECO:0007669"/>
    <property type="project" value="UniProtKB-SubCell"/>
</dbReference>
<dbReference type="GO" id="GO:0007517">
    <property type="term" value="P:muscle organ development"/>
    <property type="evidence" value="ECO:0007669"/>
    <property type="project" value="UniProtKB-KW"/>
</dbReference>
<dbReference type="GO" id="GO:0014906">
    <property type="term" value="P:myotube cell development involved in skeletal muscle regeneration"/>
    <property type="evidence" value="ECO:0000315"/>
    <property type="project" value="UniProtKB"/>
</dbReference>
<dbReference type="GO" id="GO:0014908">
    <property type="term" value="P:myotube differentiation involved in skeletal muscle regeneration"/>
    <property type="evidence" value="ECO:0000315"/>
    <property type="project" value="UniProtKB"/>
</dbReference>
<dbReference type="GO" id="GO:0045662">
    <property type="term" value="P:negative regulation of myoblast differentiation"/>
    <property type="evidence" value="ECO:0000315"/>
    <property type="project" value="UniProtKB"/>
</dbReference>
<dbReference type="GO" id="GO:1901740">
    <property type="term" value="P:negative regulation of myoblast fusion"/>
    <property type="evidence" value="ECO:0000315"/>
    <property type="project" value="UniProtKB"/>
</dbReference>
<dbReference type="Gene3D" id="1.20.140.150">
    <property type="match status" value="1"/>
</dbReference>
<dbReference type="InterPro" id="IPR004031">
    <property type="entry name" value="PMP22/EMP/MP20/Claudin"/>
</dbReference>
<dbReference type="InterPro" id="IPR026763">
    <property type="entry name" value="TMEM182"/>
</dbReference>
<dbReference type="PANTHER" id="PTHR32012:SF0">
    <property type="entry name" value="TRANSMEMBRANE PROTEIN 182"/>
    <property type="match status" value="1"/>
</dbReference>
<dbReference type="PANTHER" id="PTHR32012">
    <property type="entry name" value="TRANSMEMBRANE PROTEIN 182-RELATED"/>
    <property type="match status" value="1"/>
</dbReference>
<dbReference type="Pfam" id="PF13903">
    <property type="entry name" value="Claudin_2"/>
    <property type="match status" value="1"/>
</dbReference>
<evidence type="ECO:0000250" key="1">
    <source>
        <dbReference type="UniProtKB" id="A0A1D5NY17"/>
    </source>
</evidence>
<evidence type="ECO:0000255" key="2"/>
<evidence type="ECO:0000269" key="3">
    <source>
    </source>
</evidence>
<evidence type="ECO:0000269" key="4">
    <source>
    </source>
</evidence>
<evidence type="ECO:0000305" key="5"/>
<keyword id="KW-1003">Cell membrane</keyword>
<keyword id="KW-0325">Glycoprotein</keyword>
<keyword id="KW-0472">Membrane</keyword>
<keyword id="KW-0517">Myogenesis</keyword>
<keyword id="KW-1185">Reference proteome</keyword>
<keyword id="KW-0732">Signal</keyword>
<keyword id="KW-0812">Transmembrane</keyword>
<keyword id="KW-1133">Transmembrane helix</keyword>
<feature type="signal peptide" evidence="2">
    <location>
        <begin position="1"/>
        <end position="26"/>
    </location>
</feature>
<feature type="chain" id="PRO_0000369257" description="Transmembrane protein 182">
    <location>
        <begin position="27"/>
        <end position="229"/>
    </location>
</feature>
<feature type="topological domain" description="Extracellular" evidence="2">
    <location>
        <begin position="27"/>
        <end position="114"/>
    </location>
</feature>
<feature type="transmembrane region" description="Helical" evidence="2">
    <location>
        <begin position="115"/>
        <end position="135"/>
    </location>
</feature>
<feature type="topological domain" description="Cytoplasmic" evidence="2">
    <location>
        <begin position="136"/>
        <end position="153"/>
    </location>
</feature>
<feature type="transmembrane region" description="Helical" evidence="2">
    <location>
        <begin position="154"/>
        <end position="174"/>
    </location>
</feature>
<feature type="topological domain" description="Extracellular" evidence="2">
    <location>
        <begin position="175"/>
        <end position="200"/>
    </location>
</feature>
<feature type="transmembrane region" description="Helical" evidence="2">
    <location>
        <begin position="201"/>
        <end position="221"/>
    </location>
</feature>
<feature type="topological domain" description="Cytoplasmic" evidence="2">
    <location>
        <begin position="222"/>
        <end position="229"/>
    </location>
</feature>
<feature type="region of interest" description="Interaction with ITGB1" evidence="1">
    <location>
        <begin position="49"/>
        <end position="59"/>
    </location>
</feature>
<feature type="glycosylation site" description="N-linked (GlcNAc...) asparagine" evidence="2">
    <location>
        <position position="47"/>
    </location>
</feature>
<feature type="glycosylation site" description="N-linked (GlcNAc...) asparagine" evidence="2">
    <location>
        <position position="68"/>
    </location>
</feature>
<feature type="glycosylation site" description="N-linked (GlcNAc...) asparagine" evidence="2">
    <location>
        <position position="85"/>
    </location>
</feature>
<feature type="glycosylation site" description="N-linked (GlcNAc...) asparagine" evidence="2">
    <location>
        <position position="102"/>
    </location>
</feature>
<proteinExistence type="evidence at protein level"/>